<comment type="function">
    <text evidence="1">Plays a role in the positive regulation of NhaA.</text>
</comment>
<comment type="subcellular location">
    <subcellularLocation>
        <location evidence="3">Cytoplasm</location>
    </subcellularLocation>
</comment>
<comment type="similarity">
    <text evidence="3">Belongs to the LysR transcriptional regulatory family.</text>
</comment>
<comment type="sequence caution" evidence="3">
    <conflict type="erroneous initiation">
        <sequence resource="EMBL-CDS" id="AAN41683"/>
    </conflict>
    <text>Truncated N-terminus.</text>
</comment>
<comment type="sequence caution" evidence="3">
    <conflict type="erroneous initiation">
        <sequence resource="EMBL-CDS" id="AAP15564"/>
    </conflict>
    <text>Truncated N-terminus.</text>
</comment>
<proteinExistence type="inferred from homology"/>
<gene>
    <name type="primary">nhaR</name>
    <name type="ordered locus">SF0017</name>
    <name type="ordered locus">S0019</name>
</gene>
<protein>
    <recommendedName>
        <fullName>Transcriptional activator protein NhaR</fullName>
    </recommendedName>
    <alternativeName>
        <fullName>Na(+)/H(+) antiporter regulatory protein</fullName>
    </alternativeName>
</protein>
<reference key="1">
    <citation type="journal article" date="2002" name="Nucleic Acids Res.">
        <title>Genome sequence of Shigella flexneri 2a: insights into pathogenicity through comparison with genomes of Escherichia coli K12 and O157.</title>
        <authorList>
            <person name="Jin Q."/>
            <person name="Yuan Z."/>
            <person name="Xu J."/>
            <person name="Wang Y."/>
            <person name="Shen Y."/>
            <person name="Lu W."/>
            <person name="Wang J."/>
            <person name="Liu H."/>
            <person name="Yang J."/>
            <person name="Yang F."/>
            <person name="Zhang X."/>
            <person name="Zhang J."/>
            <person name="Yang G."/>
            <person name="Wu H."/>
            <person name="Qu D."/>
            <person name="Dong J."/>
            <person name="Sun L."/>
            <person name="Xue Y."/>
            <person name="Zhao A."/>
            <person name="Gao Y."/>
            <person name="Zhu J."/>
            <person name="Kan B."/>
            <person name="Ding K."/>
            <person name="Chen S."/>
            <person name="Cheng H."/>
            <person name="Yao Z."/>
            <person name="He B."/>
            <person name="Chen R."/>
            <person name="Ma D."/>
            <person name="Qiang B."/>
            <person name="Wen Y."/>
            <person name="Hou Y."/>
            <person name="Yu J."/>
        </authorList>
    </citation>
    <scope>NUCLEOTIDE SEQUENCE [LARGE SCALE GENOMIC DNA]</scope>
    <source>
        <strain>301 / Serotype 2a</strain>
    </source>
</reference>
<reference key="2">
    <citation type="journal article" date="2003" name="Infect. Immun.">
        <title>Complete genome sequence and comparative genomics of Shigella flexneri serotype 2a strain 2457T.</title>
        <authorList>
            <person name="Wei J."/>
            <person name="Goldberg M.B."/>
            <person name="Burland V."/>
            <person name="Venkatesan M.M."/>
            <person name="Deng W."/>
            <person name="Fournier G."/>
            <person name="Mayhew G.F."/>
            <person name="Plunkett G. III"/>
            <person name="Rose D.J."/>
            <person name="Darling A."/>
            <person name="Mau B."/>
            <person name="Perna N.T."/>
            <person name="Payne S.M."/>
            <person name="Runyen-Janecky L.J."/>
            <person name="Zhou S."/>
            <person name="Schwartz D.C."/>
            <person name="Blattner F.R."/>
        </authorList>
    </citation>
    <scope>NUCLEOTIDE SEQUENCE [LARGE SCALE GENOMIC DNA]</scope>
    <source>
        <strain>ATCC 700930 / 2457T / Serotype 2a</strain>
    </source>
</reference>
<sequence>MSMSHINYNHLYYFWHVYKEGSVVGAAEALYLTPQTITGQIRALEERLQGKLFKRKGRGLEPSELGELVYRYADKMFTLSQEMLDIVNYRKESNLLFDVGVADALSKRLVSSVLNAAVVEGEPIHLRCFESTHEMLLEQLSQHKLDMIISDCPIDSTQQEGLFSVRIGECGVSFWCTNPPPEKPFPACLEERRLLIPGRRSMLGRKLLNWFNSQGLNVEILGEFDDAALMKAFGAMHNAIFVAPTLYAYDFYADKTVVEIGRVENVMEEYHAIFAERMIQHPAVQRICNTDYSALFSPAVR</sequence>
<organism>
    <name type="scientific">Shigella flexneri</name>
    <dbReference type="NCBI Taxonomy" id="623"/>
    <lineage>
        <taxon>Bacteria</taxon>
        <taxon>Pseudomonadati</taxon>
        <taxon>Pseudomonadota</taxon>
        <taxon>Gammaproteobacteria</taxon>
        <taxon>Enterobacterales</taxon>
        <taxon>Enterobacteriaceae</taxon>
        <taxon>Shigella</taxon>
    </lineage>
</organism>
<feature type="chain" id="PRO_0000105690" description="Transcriptional activator protein NhaR">
    <location>
        <begin position="1"/>
        <end position="301"/>
    </location>
</feature>
<feature type="domain" description="HTH lysR-type" evidence="2">
    <location>
        <begin position="6"/>
        <end position="63"/>
    </location>
</feature>
<feature type="DNA-binding region" description="H-T-H motif" evidence="2">
    <location>
        <begin position="23"/>
        <end position="42"/>
    </location>
</feature>
<accession>P0A9G3</accession>
<accession>P10087</accession>
<accession>P75619</accession>
<accession>Q47409</accession>
<accession>Q83SR2</accession>
<evidence type="ECO:0000250" key="1"/>
<evidence type="ECO:0000255" key="2">
    <source>
        <dbReference type="PROSITE-ProRule" id="PRU00253"/>
    </source>
</evidence>
<evidence type="ECO:0000305" key="3"/>
<name>NHAR_SHIFL</name>
<keyword id="KW-0010">Activator</keyword>
<keyword id="KW-0963">Cytoplasm</keyword>
<keyword id="KW-0238">DNA-binding</keyword>
<keyword id="KW-1185">Reference proteome</keyword>
<keyword id="KW-0804">Transcription</keyword>
<keyword id="KW-0805">Transcription regulation</keyword>
<dbReference type="EMBL" id="AE005674">
    <property type="protein sequence ID" value="AAN41683.2"/>
    <property type="status" value="ALT_INIT"/>
    <property type="molecule type" value="Genomic_DNA"/>
</dbReference>
<dbReference type="EMBL" id="AE014073">
    <property type="protein sequence ID" value="AAP15564.1"/>
    <property type="status" value="ALT_INIT"/>
    <property type="molecule type" value="Genomic_DNA"/>
</dbReference>
<dbReference type="RefSeq" id="NP_705976.2">
    <property type="nucleotide sequence ID" value="NC_004337.2"/>
</dbReference>
<dbReference type="SMR" id="P0A9G3"/>
<dbReference type="STRING" id="198214.SF0017"/>
<dbReference type="PaxDb" id="198214-SF0017"/>
<dbReference type="GeneID" id="1027434"/>
<dbReference type="KEGG" id="sfl:SF0017"/>
<dbReference type="KEGG" id="sfx:S0019"/>
<dbReference type="PATRIC" id="fig|198214.7.peg.17"/>
<dbReference type="HOGENOM" id="CLU_039613_9_0_6"/>
<dbReference type="Proteomes" id="UP000001006">
    <property type="component" value="Chromosome"/>
</dbReference>
<dbReference type="Proteomes" id="UP000002673">
    <property type="component" value="Chromosome"/>
</dbReference>
<dbReference type="GO" id="GO:0005737">
    <property type="term" value="C:cytoplasm"/>
    <property type="evidence" value="ECO:0007669"/>
    <property type="project" value="UniProtKB-SubCell"/>
</dbReference>
<dbReference type="GO" id="GO:0003677">
    <property type="term" value="F:DNA binding"/>
    <property type="evidence" value="ECO:0007669"/>
    <property type="project" value="UniProtKB-KW"/>
</dbReference>
<dbReference type="GO" id="GO:0003700">
    <property type="term" value="F:DNA-binding transcription factor activity"/>
    <property type="evidence" value="ECO:0007669"/>
    <property type="project" value="InterPro"/>
</dbReference>
<dbReference type="GO" id="GO:2000142">
    <property type="term" value="P:regulation of DNA-templated transcription initiation"/>
    <property type="evidence" value="ECO:0007669"/>
    <property type="project" value="TreeGrafter"/>
</dbReference>
<dbReference type="CDD" id="cd08429">
    <property type="entry name" value="PBP2_NhaR"/>
    <property type="match status" value="1"/>
</dbReference>
<dbReference type="FunFam" id="1.10.10.10:FF:000180">
    <property type="entry name" value="Transcriptional activator NhaR"/>
    <property type="match status" value="1"/>
</dbReference>
<dbReference type="Gene3D" id="1.10.10.10">
    <property type="entry name" value="Winged helix-like DNA-binding domain superfamily/Winged helix DNA-binding domain"/>
    <property type="match status" value="1"/>
</dbReference>
<dbReference type="InterPro" id="IPR005119">
    <property type="entry name" value="LysR_subst-bd"/>
</dbReference>
<dbReference type="InterPro" id="IPR000847">
    <property type="entry name" value="Tscrpt_reg_HTH_LysR"/>
</dbReference>
<dbReference type="InterPro" id="IPR036388">
    <property type="entry name" value="WH-like_DNA-bd_sf"/>
</dbReference>
<dbReference type="InterPro" id="IPR036390">
    <property type="entry name" value="WH_DNA-bd_sf"/>
</dbReference>
<dbReference type="NCBIfam" id="NF008284">
    <property type="entry name" value="PRK11062.1"/>
    <property type="match status" value="1"/>
</dbReference>
<dbReference type="PANTHER" id="PTHR30293:SF2">
    <property type="entry name" value="TRANSCRIPTIONAL ACTIVATOR PROTEIN NHAR"/>
    <property type="match status" value="1"/>
</dbReference>
<dbReference type="PANTHER" id="PTHR30293">
    <property type="entry name" value="TRANSCRIPTIONAL REGULATORY PROTEIN NAC-RELATED"/>
    <property type="match status" value="1"/>
</dbReference>
<dbReference type="Pfam" id="PF00126">
    <property type="entry name" value="HTH_1"/>
    <property type="match status" value="1"/>
</dbReference>
<dbReference type="Pfam" id="PF03466">
    <property type="entry name" value="LysR_substrate"/>
    <property type="match status" value="1"/>
</dbReference>
<dbReference type="SUPFAM" id="SSF53850">
    <property type="entry name" value="Periplasmic binding protein-like II"/>
    <property type="match status" value="1"/>
</dbReference>
<dbReference type="SUPFAM" id="SSF46785">
    <property type="entry name" value="Winged helix' DNA-binding domain"/>
    <property type="match status" value="1"/>
</dbReference>
<dbReference type="PROSITE" id="PS50931">
    <property type="entry name" value="HTH_LYSR"/>
    <property type="match status" value="1"/>
</dbReference>